<accession>P60501</accession>
<name>GUAA_RHOPA</name>
<feature type="chain" id="PRO_0000140169" description="GMP synthase [glutamine-hydrolyzing]">
    <location>
        <begin position="1"/>
        <end position="540"/>
    </location>
</feature>
<feature type="domain" description="Glutamine amidotransferase type-1" evidence="1">
    <location>
        <begin position="29"/>
        <end position="222"/>
    </location>
</feature>
<feature type="domain" description="GMPS ATP-PPase" evidence="1">
    <location>
        <begin position="223"/>
        <end position="415"/>
    </location>
</feature>
<feature type="active site" description="Nucleophile" evidence="1">
    <location>
        <position position="106"/>
    </location>
</feature>
<feature type="active site" evidence="1">
    <location>
        <position position="196"/>
    </location>
</feature>
<feature type="active site" evidence="1">
    <location>
        <position position="198"/>
    </location>
</feature>
<feature type="binding site" evidence="1">
    <location>
        <begin position="250"/>
        <end position="256"/>
    </location>
    <ligand>
        <name>ATP</name>
        <dbReference type="ChEBI" id="CHEBI:30616"/>
    </ligand>
</feature>
<sequence>MTAPSTSSASSVVPSGADTSPHVAAIHEKILIVDFGSQVTQLIARRVREEGVYSEIVPFQKAEAAFAEMKPKAVILSGGPASVLDDNAPSAPMTILEAGVPVLGICYGEQTLAKQLGGTVEGGHHREFGRAQIEITDDCALFDGIWQKGGKYDVWMSHGDRVTKLPAGFRAVAQAPGSPISVIADDTRKFYAMQFHPEVVHTPDGAKLLSNFVRKVAGLTGDWTMRAFREEAIEKIRAQVGTGKVICGLSGGVDSAVAAVLIHEAIGDQLTCVFVDHGLLRKDEGKSVVDLFRHHYNIPLVHVDVSETFLGALKGVTDPEQKRKTIGKLFIDVFEAEARRVGGADFLAQGTLYPDVIESVSFTGGPSVTIKSHHNVGGLPERMNMKLVEPLRELFKDEVRALGRELGLPDVFVGRHPFPGPGLAIRCPGEITEEKLEILRNADAVYIDQIRKAGLYDVIWQAFAVLLPVRSVGVMGDGRTYDYVVGLRAVTSTDGMTADFYPFEMSFLGATATRIINEVKGVNRVVYDVTSKPPGTIEWE</sequence>
<dbReference type="EC" id="6.3.5.2" evidence="1"/>
<dbReference type="EMBL" id="BX572600">
    <property type="protein sequence ID" value="CAE27644.1"/>
    <property type="molecule type" value="Genomic_DNA"/>
</dbReference>
<dbReference type="RefSeq" id="WP_011157758.1">
    <property type="nucleotide sequence ID" value="NZ_CP116810.1"/>
</dbReference>
<dbReference type="SMR" id="P60501"/>
<dbReference type="STRING" id="258594.RPA2203"/>
<dbReference type="MEROPS" id="C26.957"/>
<dbReference type="GeneID" id="66893255"/>
<dbReference type="eggNOG" id="COG0518">
    <property type="taxonomic scope" value="Bacteria"/>
</dbReference>
<dbReference type="eggNOG" id="COG0519">
    <property type="taxonomic scope" value="Bacteria"/>
</dbReference>
<dbReference type="HOGENOM" id="CLU_014340_0_5_5"/>
<dbReference type="PhylomeDB" id="P60501"/>
<dbReference type="UniPathway" id="UPA00189">
    <property type="reaction ID" value="UER00296"/>
</dbReference>
<dbReference type="GO" id="GO:0005829">
    <property type="term" value="C:cytosol"/>
    <property type="evidence" value="ECO:0007669"/>
    <property type="project" value="TreeGrafter"/>
</dbReference>
<dbReference type="GO" id="GO:0005524">
    <property type="term" value="F:ATP binding"/>
    <property type="evidence" value="ECO:0007669"/>
    <property type="project" value="UniProtKB-UniRule"/>
</dbReference>
<dbReference type="GO" id="GO:0003921">
    <property type="term" value="F:GMP synthase activity"/>
    <property type="evidence" value="ECO:0007669"/>
    <property type="project" value="InterPro"/>
</dbReference>
<dbReference type="CDD" id="cd01742">
    <property type="entry name" value="GATase1_GMP_Synthase"/>
    <property type="match status" value="1"/>
</dbReference>
<dbReference type="CDD" id="cd01997">
    <property type="entry name" value="GMP_synthase_C"/>
    <property type="match status" value="1"/>
</dbReference>
<dbReference type="FunFam" id="3.30.300.10:FF:000002">
    <property type="entry name" value="GMP synthase [glutamine-hydrolyzing]"/>
    <property type="match status" value="1"/>
</dbReference>
<dbReference type="FunFam" id="3.40.50.620:FF:000001">
    <property type="entry name" value="GMP synthase [glutamine-hydrolyzing]"/>
    <property type="match status" value="1"/>
</dbReference>
<dbReference type="FunFam" id="3.40.50.880:FF:000001">
    <property type="entry name" value="GMP synthase [glutamine-hydrolyzing]"/>
    <property type="match status" value="1"/>
</dbReference>
<dbReference type="Gene3D" id="3.30.300.10">
    <property type="match status" value="1"/>
</dbReference>
<dbReference type="Gene3D" id="3.40.50.880">
    <property type="match status" value="1"/>
</dbReference>
<dbReference type="Gene3D" id="3.40.50.620">
    <property type="entry name" value="HUPs"/>
    <property type="match status" value="1"/>
</dbReference>
<dbReference type="HAMAP" id="MF_00344">
    <property type="entry name" value="GMP_synthase"/>
    <property type="match status" value="1"/>
</dbReference>
<dbReference type="InterPro" id="IPR029062">
    <property type="entry name" value="Class_I_gatase-like"/>
</dbReference>
<dbReference type="InterPro" id="IPR017926">
    <property type="entry name" value="GATASE"/>
</dbReference>
<dbReference type="InterPro" id="IPR001674">
    <property type="entry name" value="GMP_synth_C"/>
</dbReference>
<dbReference type="InterPro" id="IPR004739">
    <property type="entry name" value="GMP_synth_GATase"/>
</dbReference>
<dbReference type="InterPro" id="IPR022955">
    <property type="entry name" value="GMP_synthase"/>
</dbReference>
<dbReference type="InterPro" id="IPR025777">
    <property type="entry name" value="GMPS_ATP_PPase_dom"/>
</dbReference>
<dbReference type="InterPro" id="IPR022310">
    <property type="entry name" value="NAD/GMP_synthase"/>
</dbReference>
<dbReference type="InterPro" id="IPR014729">
    <property type="entry name" value="Rossmann-like_a/b/a_fold"/>
</dbReference>
<dbReference type="NCBIfam" id="TIGR00884">
    <property type="entry name" value="guaA_Cterm"/>
    <property type="match status" value="1"/>
</dbReference>
<dbReference type="NCBIfam" id="TIGR00888">
    <property type="entry name" value="guaA_Nterm"/>
    <property type="match status" value="1"/>
</dbReference>
<dbReference type="NCBIfam" id="NF000848">
    <property type="entry name" value="PRK00074.1"/>
    <property type="match status" value="1"/>
</dbReference>
<dbReference type="PANTHER" id="PTHR11922:SF2">
    <property type="entry name" value="GMP SYNTHASE [GLUTAMINE-HYDROLYZING]"/>
    <property type="match status" value="1"/>
</dbReference>
<dbReference type="PANTHER" id="PTHR11922">
    <property type="entry name" value="GMP SYNTHASE-RELATED"/>
    <property type="match status" value="1"/>
</dbReference>
<dbReference type="Pfam" id="PF00117">
    <property type="entry name" value="GATase"/>
    <property type="match status" value="1"/>
</dbReference>
<dbReference type="Pfam" id="PF00958">
    <property type="entry name" value="GMP_synt_C"/>
    <property type="match status" value="1"/>
</dbReference>
<dbReference type="Pfam" id="PF02540">
    <property type="entry name" value="NAD_synthase"/>
    <property type="match status" value="1"/>
</dbReference>
<dbReference type="PRINTS" id="PR00097">
    <property type="entry name" value="ANTSNTHASEII"/>
</dbReference>
<dbReference type="PRINTS" id="PR00096">
    <property type="entry name" value="GATASE"/>
</dbReference>
<dbReference type="SUPFAM" id="SSF52402">
    <property type="entry name" value="Adenine nucleotide alpha hydrolases-like"/>
    <property type="match status" value="1"/>
</dbReference>
<dbReference type="SUPFAM" id="SSF52317">
    <property type="entry name" value="Class I glutamine amidotransferase-like"/>
    <property type="match status" value="1"/>
</dbReference>
<dbReference type="SUPFAM" id="SSF54810">
    <property type="entry name" value="GMP synthetase C-terminal dimerisation domain"/>
    <property type="match status" value="1"/>
</dbReference>
<dbReference type="PROSITE" id="PS51273">
    <property type="entry name" value="GATASE_TYPE_1"/>
    <property type="match status" value="1"/>
</dbReference>
<dbReference type="PROSITE" id="PS51553">
    <property type="entry name" value="GMPS_ATP_PPASE"/>
    <property type="match status" value="1"/>
</dbReference>
<reference key="1">
    <citation type="journal article" date="2004" name="Nat. Biotechnol.">
        <title>Complete genome sequence of the metabolically versatile photosynthetic bacterium Rhodopseudomonas palustris.</title>
        <authorList>
            <person name="Larimer F.W."/>
            <person name="Chain P."/>
            <person name="Hauser L."/>
            <person name="Lamerdin J.E."/>
            <person name="Malfatti S."/>
            <person name="Do L."/>
            <person name="Land M.L."/>
            <person name="Pelletier D.A."/>
            <person name="Beatty J.T."/>
            <person name="Lang A.S."/>
            <person name="Tabita F.R."/>
            <person name="Gibson J.L."/>
            <person name="Hanson T.E."/>
            <person name="Bobst C."/>
            <person name="Torres y Torres J.L."/>
            <person name="Peres C."/>
            <person name="Harrison F.H."/>
            <person name="Gibson J."/>
            <person name="Harwood C.S."/>
        </authorList>
    </citation>
    <scope>NUCLEOTIDE SEQUENCE [LARGE SCALE GENOMIC DNA]</scope>
    <source>
        <strain>ATCC BAA-98 / CGA009</strain>
    </source>
</reference>
<proteinExistence type="inferred from homology"/>
<gene>
    <name evidence="1" type="primary">guaA</name>
    <name type="ordered locus">RPA2203</name>
</gene>
<organism>
    <name type="scientific">Rhodopseudomonas palustris (strain ATCC BAA-98 / CGA009)</name>
    <dbReference type="NCBI Taxonomy" id="258594"/>
    <lineage>
        <taxon>Bacteria</taxon>
        <taxon>Pseudomonadati</taxon>
        <taxon>Pseudomonadota</taxon>
        <taxon>Alphaproteobacteria</taxon>
        <taxon>Hyphomicrobiales</taxon>
        <taxon>Nitrobacteraceae</taxon>
        <taxon>Rhodopseudomonas</taxon>
    </lineage>
</organism>
<comment type="function">
    <text evidence="1">Catalyzes the synthesis of GMP from XMP.</text>
</comment>
<comment type="catalytic activity">
    <reaction evidence="1">
        <text>XMP + L-glutamine + ATP + H2O = GMP + L-glutamate + AMP + diphosphate + 2 H(+)</text>
        <dbReference type="Rhea" id="RHEA:11680"/>
        <dbReference type="ChEBI" id="CHEBI:15377"/>
        <dbReference type="ChEBI" id="CHEBI:15378"/>
        <dbReference type="ChEBI" id="CHEBI:29985"/>
        <dbReference type="ChEBI" id="CHEBI:30616"/>
        <dbReference type="ChEBI" id="CHEBI:33019"/>
        <dbReference type="ChEBI" id="CHEBI:57464"/>
        <dbReference type="ChEBI" id="CHEBI:58115"/>
        <dbReference type="ChEBI" id="CHEBI:58359"/>
        <dbReference type="ChEBI" id="CHEBI:456215"/>
        <dbReference type="EC" id="6.3.5.2"/>
    </reaction>
</comment>
<comment type="pathway">
    <text evidence="1">Purine metabolism; GMP biosynthesis; GMP from XMP (L-Gln route): step 1/1.</text>
</comment>
<comment type="subunit">
    <text evidence="1">Homodimer.</text>
</comment>
<protein>
    <recommendedName>
        <fullName evidence="1">GMP synthase [glutamine-hydrolyzing]</fullName>
        <ecNumber evidence="1">6.3.5.2</ecNumber>
    </recommendedName>
    <alternativeName>
        <fullName evidence="1">GMP synthetase</fullName>
    </alternativeName>
    <alternativeName>
        <fullName evidence="1">Glutamine amidotransferase</fullName>
    </alternativeName>
</protein>
<keyword id="KW-0067">ATP-binding</keyword>
<keyword id="KW-0315">Glutamine amidotransferase</keyword>
<keyword id="KW-0332">GMP biosynthesis</keyword>
<keyword id="KW-0436">Ligase</keyword>
<keyword id="KW-0547">Nucleotide-binding</keyword>
<keyword id="KW-0658">Purine biosynthesis</keyword>
<evidence type="ECO:0000255" key="1">
    <source>
        <dbReference type="HAMAP-Rule" id="MF_00344"/>
    </source>
</evidence>